<keyword id="KW-0202">Cytokine</keyword>
<keyword id="KW-0325">Glycoprotein</keyword>
<keyword id="KW-0472">Membrane</keyword>
<keyword id="KW-1185">Reference proteome</keyword>
<keyword id="KW-0735">Signal-anchor</keyword>
<keyword id="KW-0812">Transmembrane</keyword>
<keyword id="KW-1133">Transmembrane helix</keyword>
<accession>P41155</accession>
<organism>
    <name type="scientific">Mus musculus</name>
    <name type="common">Mouse</name>
    <dbReference type="NCBI Taxonomy" id="10090"/>
    <lineage>
        <taxon>Eukaryota</taxon>
        <taxon>Metazoa</taxon>
        <taxon>Chordata</taxon>
        <taxon>Craniata</taxon>
        <taxon>Vertebrata</taxon>
        <taxon>Euteleostomi</taxon>
        <taxon>Mammalia</taxon>
        <taxon>Eutheria</taxon>
        <taxon>Euarchontoglires</taxon>
        <taxon>Glires</taxon>
        <taxon>Rodentia</taxon>
        <taxon>Myomorpha</taxon>
        <taxon>Muroidea</taxon>
        <taxon>Muridae</taxon>
        <taxon>Murinae</taxon>
        <taxon>Mus</taxon>
        <taxon>Mus</taxon>
    </lineage>
</organism>
<evidence type="ECO:0000250" key="1"/>
<evidence type="ECO:0000255" key="2"/>
<evidence type="ECO:0000255" key="3">
    <source>
        <dbReference type="PROSITE-ProRule" id="PRU01387"/>
    </source>
</evidence>
<evidence type="ECO:0000256" key="4">
    <source>
        <dbReference type="SAM" id="MobiDB-lite"/>
    </source>
</evidence>
<evidence type="ECO:0000305" key="5"/>
<reference key="1">
    <citation type="journal article" date="1995" name="Proc. Natl. Acad. Sci. U.S.A.">
        <title>Cloning and expression analysis of the murine lymphotoxin beta gene.</title>
        <authorList>
            <person name="Pokholok D.K."/>
            <person name="Maroulakou I.G."/>
            <person name="Kuprash D.V."/>
            <person name="Alimzhanov M.B."/>
            <person name="Kozlov S.V."/>
            <person name="Novobrantseva T.I."/>
            <person name="Turetskaya R.L."/>
            <person name="Green J.E."/>
            <person name="Nedospasov S.A."/>
        </authorList>
    </citation>
    <scope>NUCLEOTIDE SEQUENCE [GENOMIC DNA]</scope>
    <source>
        <strain>C57BL/6J</strain>
    </source>
</reference>
<reference key="2">
    <citation type="journal article" date="1995" name="J. Immunol.">
        <title>Characterization of the mouse lymphotoxin-beta gene.</title>
        <authorList>
            <person name="Lawton P."/>
            <person name="Nelson J."/>
            <person name="Tizard R."/>
            <person name="Browning J.L."/>
        </authorList>
    </citation>
    <scope>NUCLEOTIDE SEQUENCE [GENOMIC DNA / MRNA]</scope>
    <source>
        <strain>C57BL/6J</strain>
        <tissue>Spleen</tissue>
    </source>
</reference>
<reference key="3">
    <citation type="journal article" date="2003" name="Genome Res.">
        <title>Analysis of the gene-dense major histocompatibility complex class III region and its comparison to mouse.</title>
        <authorList>
            <person name="Xie T."/>
            <person name="Rowen L."/>
            <person name="Aguado B."/>
            <person name="Ahearn M.E."/>
            <person name="Madan A."/>
            <person name="Qin S."/>
            <person name="Campbell R.D."/>
            <person name="Hood L."/>
        </authorList>
    </citation>
    <scope>NUCLEOTIDE SEQUENCE [LARGE SCALE GENOMIC DNA]</scope>
    <source>
        <strain>129</strain>
    </source>
</reference>
<comment type="function">
    <text>Cytokine that binds to LTBR/TNFRSF3. May play a specific role in immune response regulation. Provides the membrane anchor for the attachment of the heterotrimeric complex to the cell surface.</text>
</comment>
<comment type="subunit">
    <text evidence="1">Heterotrimer of either two LTB and one LTA subunits or (less prevalent) two LTA and one LTB subunits.</text>
</comment>
<comment type="subcellular location">
    <subcellularLocation>
        <location evidence="5">Membrane</location>
        <topology evidence="5">Single-pass type II membrane protein</topology>
    </subcellularLocation>
</comment>
<comment type="similarity">
    <text evidence="5">Belongs to the tumor necrosis factor family.</text>
</comment>
<sequence length="306" mass="32329">MGTRGLQGLGGRPQGRGCLLLAVAGATSLVTLLLAVPITVLAVLALVPQDQGRRVEKIIGSGAQAQKRLDDSKPSCILPSPSSLSETPDPRLHPQRSNASRNLASTSQGPVAQSSREASAWMTILSPAADSTPDPGVQQLPKGEPETDLNPELPAAHLIGAWMSGQGLSWEASQEEAFLRSGAQFSPTHGLALPQDGVYYLYCHVGYRGRTPPAGRSRARSLTLRSALYRAGGAYGRGSPELLLEGAETVTPVVDPIGYGSLWYTSVGFGGLAQLRSGERVYVNISHPDMVDYRRGKTFFGAVMVG</sequence>
<dbReference type="EMBL" id="U12029">
    <property type="protein sequence ID" value="AAA67716.1"/>
    <property type="molecule type" value="Genomic_DNA"/>
</dbReference>
<dbReference type="EMBL" id="U16984">
    <property type="protein sequence ID" value="AAB60493.1"/>
    <property type="molecule type" value="Genomic_DNA"/>
</dbReference>
<dbReference type="EMBL" id="U16985">
    <property type="protein sequence ID" value="AAA70089.1"/>
    <property type="molecule type" value="mRNA"/>
</dbReference>
<dbReference type="EMBL" id="U06950">
    <property type="protein sequence ID" value="AAA18592.1"/>
    <property type="molecule type" value="Unassigned_DNA"/>
</dbReference>
<dbReference type="EMBL" id="AF109719">
    <property type="protein sequence ID" value="AAC82483.1"/>
    <property type="molecule type" value="Genomic_DNA"/>
</dbReference>
<dbReference type="CCDS" id="CCDS28690.1"/>
<dbReference type="PIR" id="I49139">
    <property type="entry name" value="I49139"/>
</dbReference>
<dbReference type="RefSeq" id="NP_032544.1">
    <property type="nucleotide sequence ID" value="NM_008518.2"/>
</dbReference>
<dbReference type="SMR" id="P41155"/>
<dbReference type="BioGRID" id="201218">
    <property type="interactions" value="2"/>
</dbReference>
<dbReference type="FunCoup" id="P41155">
    <property type="interactions" value="993"/>
</dbReference>
<dbReference type="IntAct" id="P41155">
    <property type="interactions" value="1"/>
</dbReference>
<dbReference type="STRING" id="10090.ENSMUSP00000025262"/>
<dbReference type="GlyCosmos" id="P41155">
    <property type="glycosylation" value="2 sites, No reported glycans"/>
</dbReference>
<dbReference type="GlyGen" id="P41155">
    <property type="glycosylation" value="2 sites"/>
</dbReference>
<dbReference type="iPTMnet" id="P41155"/>
<dbReference type="PhosphoSitePlus" id="P41155"/>
<dbReference type="PaxDb" id="10090-ENSMUSP00000025262"/>
<dbReference type="ProteomicsDB" id="258790"/>
<dbReference type="Antibodypedia" id="27204">
    <property type="antibodies" value="193 antibodies from 26 providers"/>
</dbReference>
<dbReference type="DNASU" id="16994"/>
<dbReference type="Ensembl" id="ENSMUST00000025262.6">
    <property type="protein sequence ID" value="ENSMUSP00000025262.6"/>
    <property type="gene ID" value="ENSMUSG00000024399.6"/>
</dbReference>
<dbReference type="GeneID" id="16994"/>
<dbReference type="KEGG" id="mmu:16994"/>
<dbReference type="UCSC" id="uc008cgp.2">
    <property type="organism name" value="mouse"/>
</dbReference>
<dbReference type="AGR" id="MGI:104796"/>
<dbReference type="CTD" id="4050"/>
<dbReference type="MGI" id="MGI:104796">
    <property type="gene designation" value="Ltb"/>
</dbReference>
<dbReference type="VEuPathDB" id="HostDB:ENSMUSG00000024399"/>
<dbReference type="eggNOG" id="ENOG502SMSQ">
    <property type="taxonomic scope" value="Eukaryota"/>
</dbReference>
<dbReference type="GeneTree" id="ENSGT01130000278318"/>
<dbReference type="InParanoid" id="P41155"/>
<dbReference type="OMA" id="GAWMKGQ"/>
<dbReference type="OrthoDB" id="9933527at2759"/>
<dbReference type="PhylomeDB" id="P41155"/>
<dbReference type="TreeFam" id="TF337780"/>
<dbReference type="Reactome" id="R-MMU-5668541">
    <property type="pathway name" value="TNFR2 non-canonical NF-kB pathway"/>
</dbReference>
<dbReference type="Reactome" id="R-MMU-5676594">
    <property type="pathway name" value="TNF receptor superfamily (TNFSF) members mediating non-canonical NF-kB pathway"/>
</dbReference>
<dbReference type="BioGRID-ORCS" id="16994">
    <property type="hits" value="3 hits in 79 CRISPR screens"/>
</dbReference>
<dbReference type="PRO" id="PR:P41155"/>
<dbReference type="Proteomes" id="UP000000589">
    <property type="component" value="Chromosome 17"/>
</dbReference>
<dbReference type="RNAct" id="P41155">
    <property type="molecule type" value="protein"/>
</dbReference>
<dbReference type="Bgee" id="ENSMUSG00000024399">
    <property type="expression patterns" value="Expressed in spleen and 52 other cell types or tissues"/>
</dbReference>
<dbReference type="ExpressionAtlas" id="P41155">
    <property type="expression patterns" value="baseline and differential"/>
</dbReference>
<dbReference type="GO" id="GO:0005615">
    <property type="term" value="C:extracellular space"/>
    <property type="evidence" value="ECO:0007669"/>
    <property type="project" value="UniProtKB-KW"/>
</dbReference>
<dbReference type="GO" id="GO:0005886">
    <property type="term" value="C:plasma membrane"/>
    <property type="evidence" value="ECO:0000304"/>
    <property type="project" value="MGI"/>
</dbReference>
<dbReference type="GO" id="GO:0005125">
    <property type="term" value="F:cytokine activity"/>
    <property type="evidence" value="ECO:0007669"/>
    <property type="project" value="UniProtKB-KW"/>
</dbReference>
<dbReference type="GO" id="GO:0005164">
    <property type="term" value="F:tumor necrosis factor receptor binding"/>
    <property type="evidence" value="ECO:0007669"/>
    <property type="project" value="InterPro"/>
</dbReference>
<dbReference type="GO" id="GO:0010467">
    <property type="term" value="P:gene expression"/>
    <property type="evidence" value="ECO:0000315"/>
    <property type="project" value="MGI"/>
</dbReference>
<dbReference type="GO" id="GO:0006955">
    <property type="term" value="P:immune response"/>
    <property type="evidence" value="ECO:0007669"/>
    <property type="project" value="InterPro"/>
</dbReference>
<dbReference type="GO" id="GO:0048535">
    <property type="term" value="P:lymph node development"/>
    <property type="evidence" value="ECO:0000315"/>
    <property type="project" value="MGI"/>
</dbReference>
<dbReference type="GO" id="GO:0032735">
    <property type="term" value="P:positive regulation of interleukin-12 production"/>
    <property type="evidence" value="ECO:0000315"/>
    <property type="project" value="UniProtKB"/>
</dbReference>
<dbReference type="GO" id="GO:0043588">
    <property type="term" value="P:skin development"/>
    <property type="evidence" value="ECO:0000315"/>
    <property type="project" value="MGI"/>
</dbReference>
<dbReference type="CDD" id="cd00184">
    <property type="entry name" value="TNF"/>
    <property type="match status" value="1"/>
</dbReference>
<dbReference type="FunFam" id="2.60.120.40:FF:000030">
    <property type="entry name" value="Lymphotoxin-beta"/>
    <property type="match status" value="1"/>
</dbReference>
<dbReference type="Gene3D" id="2.60.120.40">
    <property type="match status" value="1"/>
</dbReference>
<dbReference type="InterPro" id="IPR006053">
    <property type="entry name" value="TNF"/>
</dbReference>
<dbReference type="InterPro" id="IPR002961">
    <property type="entry name" value="TNF_C"/>
</dbReference>
<dbReference type="InterPro" id="IPR021184">
    <property type="entry name" value="TNF_CS"/>
</dbReference>
<dbReference type="InterPro" id="IPR006052">
    <property type="entry name" value="TNF_dom"/>
</dbReference>
<dbReference type="InterPro" id="IPR008983">
    <property type="entry name" value="Tumour_necrosis_fac-like_dom"/>
</dbReference>
<dbReference type="PANTHER" id="PTHR11471:SF29">
    <property type="entry name" value="LYMPHOTOXIN-BETA"/>
    <property type="match status" value="1"/>
</dbReference>
<dbReference type="PANTHER" id="PTHR11471">
    <property type="entry name" value="TUMOR NECROSIS FACTOR FAMILY MEMBER"/>
    <property type="match status" value="1"/>
</dbReference>
<dbReference type="Pfam" id="PF00229">
    <property type="entry name" value="TNF"/>
    <property type="match status" value="1"/>
</dbReference>
<dbReference type="PRINTS" id="PR01234">
    <property type="entry name" value="TNECROSISFCT"/>
</dbReference>
<dbReference type="PRINTS" id="PR01237">
    <property type="entry name" value="TNFC"/>
</dbReference>
<dbReference type="SMART" id="SM00207">
    <property type="entry name" value="TNF"/>
    <property type="match status" value="1"/>
</dbReference>
<dbReference type="SUPFAM" id="SSF49842">
    <property type="entry name" value="TNF-like"/>
    <property type="match status" value="1"/>
</dbReference>
<dbReference type="PROSITE" id="PS00251">
    <property type="entry name" value="THD_1"/>
    <property type="match status" value="1"/>
</dbReference>
<dbReference type="PROSITE" id="PS50049">
    <property type="entry name" value="THD_2"/>
    <property type="match status" value="1"/>
</dbReference>
<protein>
    <recommendedName>
        <fullName>Lymphotoxin-beta</fullName>
        <shortName>LT-beta</shortName>
    </recommendedName>
    <alternativeName>
        <fullName>Tumor necrosis factor C</fullName>
        <shortName>TNF-C</shortName>
    </alternativeName>
    <alternativeName>
        <fullName>Tumor necrosis factor ligand superfamily member 3</fullName>
    </alternativeName>
</protein>
<feature type="chain" id="PRO_0000185490" description="Lymphotoxin-beta">
    <location>
        <begin position="1"/>
        <end position="306"/>
    </location>
</feature>
<feature type="topological domain" description="Cytoplasmic" evidence="2">
    <location>
        <begin position="1"/>
        <end position="27"/>
    </location>
</feature>
<feature type="transmembrane region" description="Helical; Signal-anchor for type II membrane protein" evidence="2">
    <location>
        <begin position="28"/>
        <end position="48"/>
    </location>
</feature>
<feature type="topological domain" description="Extracellular" evidence="2">
    <location>
        <begin position="49"/>
        <end position="306"/>
    </location>
</feature>
<feature type="domain" description="THD" evidence="3">
    <location>
        <begin position="154"/>
        <end position="305"/>
    </location>
</feature>
<feature type="region of interest" description="Disordered" evidence="4">
    <location>
        <begin position="63"/>
        <end position="112"/>
    </location>
</feature>
<feature type="region of interest" description="Disordered" evidence="4">
    <location>
        <begin position="127"/>
        <end position="151"/>
    </location>
</feature>
<feature type="compositionally biased region" description="Low complexity" evidence="4">
    <location>
        <begin position="74"/>
        <end position="85"/>
    </location>
</feature>
<feature type="compositionally biased region" description="Polar residues" evidence="4">
    <location>
        <begin position="95"/>
        <end position="112"/>
    </location>
</feature>
<feature type="glycosylation site" description="N-linked (GlcNAc...) asparagine" evidence="2">
    <location>
        <position position="98"/>
    </location>
</feature>
<feature type="glycosylation site" description="N-linked (GlcNAc...) asparagine" evidence="2">
    <location>
        <position position="284"/>
    </location>
</feature>
<name>TNFC_MOUSE</name>
<proteinExistence type="evidence at transcript level"/>
<gene>
    <name type="primary">Ltb</name>
    <name type="synonym">Tnfc</name>
    <name type="synonym">Tnfsf3</name>
</gene>